<sequence length="387" mass="43378">MSRVGIVLLNLGGPERIQDVGPFLYNLFADPEIIRLPIPALQKPLAWLISTLRSNKSQEAYRSIGGGSPLRRITDQQARELQSLLRQRNVDATTYVAMRYWHPFTESAVADMKADGIEQVVVLPLYPHFSISTSGSSFRELQRLRQGDERFAQLPLRAIRSWHDHPGYLKAMAQLMEREIDACVDPSTAHVFFSAHGVPKSYVEEAGDPYQKEIESCAELIMKTLGRDNPWTLAYQSRVGPVEWLQPYTEEALEELGEKGVKELVVVPISFVSEHIETLEEIDIEYREIATEAGVSNFRRVPALDIDPTFIASLADLVETSLAGPEVDLDEAAALPARTKLYPQEKWSWGWNNSSEVWNGRLAMLGFSAFLVELISGHGPLHALGLL</sequence>
<gene>
    <name evidence="1" type="primary">hemH</name>
    <name type="ordered locus">SynRCC307_0854</name>
</gene>
<accession>A5GS98</accession>
<dbReference type="EC" id="4.98.1.1" evidence="1"/>
<dbReference type="EMBL" id="CT978603">
    <property type="protein sequence ID" value="CAK27757.1"/>
    <property type="molecule type" value="Genomic_DNA"/>
</dbReference>
<dbReference type="SMR" id="A5GS98"/>
<dbReference type="STRING" id="316278.SynRCC307_0854"/>
<dbReference type="KEGG" id="syr:SynRCC307_0854"/>
<dbReference type="eggNOG" id="COG0276">
    <property type="taxonomic scope" value="Bacteria"/>
</dbReference>
<dbReference type="HOGENOM" id="CLU_018884_4_1_3"/>
<dbReference type="OrthoDB" id="9809741at2"/>
<dbReference type="UniPathway" id="UPA00252">
    <property type="reaction ID" value="UER00325"/>
</dbReference>
<dbReference type="Proteomes" id="UP000001115">
    <property type="component" value="Chromosome"/>
</dbReference>
<dbReference type="GO" id="GO:0005737">
    <property type="term" value="C:cytoplasm"/>
    <property type="evidence" value="ECO:0007669"/>
    <property type="project" value="UniProtKB-SubCell"/>
</dbReference>
<dbReference type="GO" id="GO:0004325">
    <property type="term" value="F:ferrochelatase activity"/>
    <property type="evidence" value="ECO:0007669"/>
    <property type="project" value="UniProtKB-UniRule"/>
</dbReference>
<dbReference type="GO" id="GO:0046872">
    <property type="term" value="F:metal ion binding"/>
    <property type="evidence" value="ECO:0007669"/>
    <property type="project" value="UniProtKB-KW"/>
</dbReference>
<dbReference type="GO" id="GO:0006783">
    <property type="term" value="P:heme biosynthetic process"/>
    <property type="evidence" value="ECO:0007669"/>
    <property type="project" value="UniProtKB-UniRule"/>
</dbReference>
<dbReference type="CDD" id="cd00419">
    <property type="entry name" value="Ferrochelatase_C"/>
    <property type="match status" value="1"/>
</dbReference>
<dbReference type="CDD" id="cd03411">
    <property type="entry name" value="Ferrochelatase_N"/>
    <property type="match status" value="1"/>
</dbReference>
<dbReference type="FunFam" id="3.40.50.1400:FF:000006">
    <property type="entry name" value="Ferrochelatase"/>
    <property type="match status" value="1"/>
</dbReference>
<dbReference type="Gene3D" id="3.40.50.1400">
    <property type="match status" value="2"/>
</dbReference>
<dbReference type="HAMAP" id="MF_00323">
    <property type="entry name" value="Ferrochelatase"/>
    <property type="match status" value="1"/>
</dbReference>
<dbReference type="InterPro" id="IPR001015">
    <property type="entry name" value="Ferrochelatase"/>
</dbReference>
<dbReference type="InterPro" id="IPR019772">
    <property type="entry name" value="Ferrochelatase_AS"/>
</dbReference>
<dbReference type="InterPro" id="IPR033644">
    <property type="entry name" value="Ferrochelatase_C"/>
</dbReference>
<dbReference type="InterPro" id="IPR033659">
    <property type="entry name" value="Ferrochelatase_N"/>
</dbReference>
<dbReference type="NCBIfam" id="TIGR00109">
    <property type="entry name" value="hemH"/>
    <property type="match status" value="1"/>
</dbReference>
<dbReference type="PANTHER" id="PTHR11108">
    <property type="entry name" value="FERROCHELATASE"/>
    <property type="match status" value="1"/>
</dbReference>
<dbReference type="PANTHER" id="PTHR11108:SF1">
    <property type="entry name" value="FERROCHELATASE, MITOCHONDRIAL"/>
    <property type="match status" value="1"/>
</dbReference>
<dbReference type="Pfam" id="PF00762">
    <property type="entry name" value="Ferrochelatase"/>
    <property type="match status" value="1"/>
</dbReference>
<dbReference type="SUPFAM" id="SSF53800">
    <property type="entry name" value="Chelatase"/>
    <property type="match status" value="1"/>
</dbReference>
<dbReference type="SUPFAM" id="SSF103511">
    <property type="entry name" value="Chlorophyll a-b binding protein"/>
    <property type="match status" value="1"/>
</dbReference>
<dbReference type="PROSITE" id="PS00534">
    <property type="entry name" value="FERROCHELATASE"/>
    <property type="match status" value="1"/>
</dbReference>
<keyword id="KW-0963">Cytoplasm</keyword>
<keyword id="KW-0350">Heme biosynthesis</keyword>
<keyword id="KW-0408">Iron</keyword>
<keyword id="KW-0456">Lyase</keyword>
<keyword id="KW-0479">Metal-binding</keyword>
<keyword id="KW-0627">Porphyrin biosynthesis</keyword>
<keyword id="KW-1185">Reference proteome</keyword>
<protein>
    <recommendedName>
        <fullName evidence="1">Ferrochelatase</fullName>
        <ecNumber evidence="1">4.98.1.1</ecNumber>
    </recommendedName>
    <alternativeName>
        <fullName evidence="1">Heme synthase</fullName>
    </alternativeName>
    <alternativeName>
        <fullName evidence="1">Protoheme ferro-lyase</fullName>
    </alternativeName>
</protein>
<evidence type="ECO:0000255" key="1">
    <source>
        <dbReference type="HAMAP-Rule" id="MF_00323"/>
    </source>
</evidence>
<reference key="1">
    <citation type="submission" date="2006-05" db="EMBL/GenBank/DDBJ databases">
        <authorList>
            <consortium name="Genoscope"/>
        </authorList>
    </citation>
    <scope>NUCLEOTIDE SEQUENCE [LARGE SCALE GENOMIC DNA]</scope>
    <source>
        <strain>RCC307</strain>
    </source>
</reference>
<comment type="function">
    <text evidence="1">Catalyzes the ferrous insertion into protoporphyrin IX.</text>
</comment>
<comment type="catalytic activity">
    <reaction evidence="1">
        <text>heme b + 2 H(+) = protoporphyrin IX + Fe(2+)</text>
        <dbReference type="Rhea" id="RHEA:22584"/>
        <dbReference type="ChEBI" id="CHEBI:15378"/>
        <dbReference type="ChEBI" id="CHEBI:29033"/>
        <dbReference type="ChEBI" id="CHEBI:57306"/>
        <dbReference type="ChEBI" id="CHEBI:60344"/>
        <dbReference type="EC" id="4.98.1.1"/>
    </reaction>
</comment>
<comment type="pathway">
    <text evidence="1">Porphyrin-containing compound metabolism; protoheme biosynthesis; protoheme from protoporphyrin-IX: step 1/1.</text>
</comment>
<comment type="subcellular location">
    <subcellularLocation>
        <location evidence="1">Cytoplasm</location>
    </subcellularLocation>
</comment>
<comment type="similarity">
    <text evidence="1">Belongs to the ferrochelatase family.</text>
</comment>
<organism>
    <name type="scientific">Synechococcus sp. (strain RCC307)</name>
    <dbReference type="NCBI Taxonomy" id="316278"/>
    <lineage>
        <taxon>Bacteria</taxon>
        <taxon>Bacillati</taxon>
        <taxon>Cyanobacteriota</taxon>
        <taxon>Cyanophyceae</taxon>
        <taxon>Synechococcales</taxon>
        <taxon>Synechococcaceae</taxon>
        <taxon>Synechococcus</taxon>
    </lineage>
</organism>
<name>HEMH_SYNR3</name>
<feature type="chain" id="PRO_1000019379" description="Ferrochelatase">
    <location>
        <begin position="1"/>
        <end position="387"/>
    </location>
</feature>
<feature type="binding site" evidence="1">
    <location>
        <position position="196"/>
    </location>
    <ligand>
        <name>Fe cation</name>
        <dbReference type="ChEBI" id="CHEBI:24875"/>
    </ligand>
</feature>
<feature type="binding site" evidence="1">
    <location>
        <position position="277"/>
    </location>
    <ligand>
        <name>Fe cation</name>
        <dbReference type="ChEBI" id="CHEBI:24875"/>
    </ligand>
</feature>
<proteinExistence type="inferred from homology"/>